<reference key="1">
    <citation type="journal article" date="2008" name="PLoS ONE">
        <title>A recalibrated molecular clock and independent origins for the cholera pandemic clones.</title>
        <authorList>
            <person name="Feng L."/>
            <person name="Reeves P.R."/>
            <person name="Lan R."/>
            <person name="Ren Y."/>
            <person name="Gao C."/>
            <person name="Zhou Z."/>
            <person name="Ren Y."/>
            <person name="Cheng J."/>
            <person name="Wang W."/>
            <person name="Wang J."/>
            <person name="Qian W."/>
            <person name="Li D."/>
            <person name="Wang L."/>
        </authorList>
    </citation>
    <scope>NUCLEOTIDE SEQUENCE [LARGE SCALE GENOMIC DNA]</scope>
    <source>
        <strain>M66-2</strain>
    </source>
</reference>
<organism>
    <name type="scientific">Vibrio cholerae serotype O1 (strain M66-2)</name>
    <dbReference type="NCBI Taxonomy" id="579112"/>
    <lineage>
        <taxon>Bacteria</taxon>
        <taxon>Pseudomonadati</taxon>
        <taxon>Pseudomonadota</taxon>
        <taxon>Gammaproteobacteria</taxon>
        <taxon>Vibrionales</taxon>
        <taxon>Vibrionaceae</taxon>
        <taxon>Vibrio</taxon>
    </lineage>
</organism>
<accession>C3LLQ4</accession>
<dbReference type="EMBL" id="CP001233">
    <property type="protein sequence ID" value="ACP05480.1"/>
    <property type="molecule type" value="Genomic_DNA"/>
</dbReference>
<dbReference type="RefSeq" id="WP_000818869.1">
    <property type="nucleotide sequence ID" value="NC_012578.1"/>
</dbReference>
<dbReference type="SMR" id="C3LLQ4"/>
<dbReference type="KEGG" id="vcm:VCM66_1163"/>
<dbReference type="HOGENOM" id="CLU_143392_0_0_6"/>
<dbReference type="Proteomes" id="UP000001217">
    <property type="component" value="Chromosome I"/>
</dbReference>
<dbReference type="Gene3D" id="3.10.450.140">
    <property type="entry name" value="dsDNA mimic, putative"/>
    <property type="match status" value="1"/>
</dbReference>
<dbReference type="HAMAP" id="MF_00680">
    <property type="entry name" value="Put_dsDNA_mimic"/>
    <property type="match status" value="1"/>
</dbReference>
<dbReference type="InterPro" id="IPR007376">
    <property type="entry name" value="dsDNA_mimic_put"/>
</dbReference>
<dbReference type="InterPro" id="IPR036763">
    <property type="entry name" value="Put_dsDNA_mimic_sf"/>
</dbReference>
<dbReference type="NCBIfam" id="NF003469">
    <property type="entry name" value="PRK05094.1"/>
    <property type="match status" value="1"/>
</dbReference>
<dbReference type="Pfam" id="PF04269">
    <property type="entry name" value="DUF440"/>
    <property type="match status" value="1"/>
</dbReference>
<dbReference type="PIRSF" id="PIRSF004916">
    <property type="entry name" value="UCP004916"/>
    <property type="match status" value="1"/>
</dbReference>
<dbReference type="SUPFAM" id="SSF102816">
    <property type="entry name" value="Putative dsDNA mimic"/>
    <property type="match status" value="1"/>
</dbReference>
<comment type="function">
    <text evidence="1">May act as a double-stranded DNA (dsDNA) mimic. Probably regulates the activity of a dsDNA-binding protein.</text>
</comment>
<comment type="similarity">
    <text evidence="1">Belongs to the putative dsDNA mimic protein family.</text>
</comment>
<protein>
    <recommendedName>
        <fullName evidence="1">Putative double-stranded DNA mimic protein VCM66_1163</fullName>
    </recommendedName>
</protein>
<sequence length="106" mass="12174">MAELISIDDTIDTAYDIFLEMAPDNLEPADVILFTAQFDDRGAAELVDVGDDWDDQVGFEVDKEIYAEVRIGLVNEENDVLDDVFARMLISRDPDQKFCHMLWKRD</sequence>
<name>Y1163_VIBCM</name>
<proteinExistence type="inferred from homology"/>
<feature type="chain" id="PRO_1000200446" description="Putative double-stranded DNA mimic protein VCM66_1163">
    <location>
        <begin position="1"/>
        <end position="106"/>
    </location>
</feature>
<gene>
    <name type="ordered locus">VCM66_1163</name>
</gene>
<evidence type="ECO:0000255" key="1">
    <source>
        <dbReference type="HAMAP-Rule" id="MF_00680"/>
    </source>
</evidence>